<accession>Q0ICR3</accession>
<reference key="1">
    <citation type="journal article" date="2006" name="Proc. Natl. Acad. Sci. U.S.A.">
        <title>Genome sequence of Synechococcus CC9311: insights into adaptation to a coastal environment.</title>
        <authorList>
            <person name="Palenik B."/>
            <person name="Ren Q."/>
            <person name="Dupont C.L."/>
            <person name="Myers G.S."/>
            <person name="Heidelberg J.F."/>
            <person name="Badger J.H."/>
            <person name="Madupu R."/>
            <person name="Nelson W.C."/>
            <person name="Brinkac L.M."/>
            <person name="Dodson R.J."/>
            <person name="Durkin A.S."/>
            <person name="Daugherty S.C."/>
            <person name="Sullivan S.A."/>
            <person name="Khouri H."/>
            <person name="Mohamoud Y."/>
            <person name="Halpin R."/>
            <person name="Paulsen I.T."/>
        </authorList>
    </citation>
    <scope>NUCLEOTIDE SEQUENCE [LARGE SCALE GENOMIC DNA]</scope>
    <source>
        <strain>CC9311</strain>
    </source>
</reference>
<protein>
    <recommendedName>
        <fullName evidence="1">Photosystem II reaction center protein T</fullName>
        <shortName evidence="1">PSII-T</shortName>
    </recommendedName>
</protein>
<dbReference type="EMBL" id="CP000435">
    <property type="protein sequence ID" value="ABI46886.1"/>
    <property type="molecule type" value="Genomic_DNA"/>
</dbReference>
<dbReference type="RefSeq" id="WP_006854916.1">
    <property type="nucleotide sequence ID" value="NC_008319.1"/>
</dbReference>
<dbReference type="SMR" id="Q0ICR3"/>
<dbReference type="STRING" id="64471.sync_0533"/>
<dbReference type="KEGG" id="syg:sync_0533"/>
<dbReference type="eggNOG" id="ENOG50323KB">
    <property type="taxonomic scope" value="Bacteria"/>
</dbReference>
<dbReference type="HOGENOM" id="CLU_217078_1_0_3"/>
<dbReference type="Proteomes" id="UP000001961">
    <property type="component" value="Chromosome"/>
</dbReference>
<dbReference type="GO" id="GO:0009539">
    <property type="term" value="C:photosystem II reaction center"/>
    <property type="evidence" value="ECO:0007669"/>
    <property type="project" value="InterPro"/>
</dbReference>
<dbReference type="GO" id="GO:0031676">
    <property type="term" value="C:plasma membrane-derived thylakoid membrane"/>
    <property type="evidence" value="ECO:0007669"/>
    <property type="project" value="UniProtKB-SubCell"/>
</dbReference>
<dbReference type="GO" id="GO:0015979">
    <property type="term" value="P:photosynthesis"/>
    <property type="evidence" value="ECO:0007669"/>
    <property type="project" value="UniProtKB-UniRule"/>
</dbReference>
<dbReference type="HAMAP" id="MF_00808">
    <property type="entry name" value="PSII_PsbT"/>
    <property type="match status" value="1"/>
</dbReference>
<dbReference type="InterPro" id="IPR001743">
    <property type="entry name" value="PSII_PsbT"/>
</dbReference>
<dbReference type="InterPro" id="IPR037268">
    <property type="entry name" value="PSII_PsbT_sf"/>
</dbReference>
<dbReference type="NCBIfam" id="NF008825">
    <property type="entry name" value="PRK11875.1"/>
    <property type="match status" value="1"/>
</dbReference>
<dbReference type="Pfam" id="PF01405">
    <property type="entry name" value="PsbT"/>
    <property type="match status" value="1"/>
</dbReference>
<dbReference type="SUPFAM" id="SSF161029">
    <property type="entry name" value="Photosystem II reaction center protein T, PsbT"/>
    <property type="match status" value="1"/>
</dbReference>
<feature type="chain" id="PRO_1000047104" description="Photosystem II reaction center protein T">
    <location>
        <begin position="1"/>
        <end position="31"/>
    </location>
</feature>
<feature type="transmembrane region" description="Helical" evidence="1">
    <location>
        <begin position="3"/>
        <end position="23"/>
    </location>
</feature>
<sequence length="31" mass="3428">MESFAYILILGLAIATLFFAIAFRDPPKIGK</sequence>
<proteinExistence type="inferred from homology"/>
<organism>
    <name type="scientific">Synechococcus sp. (strain CC9311)</name>
    <dbReference type="NCBI Taxonomy" id="64471"/>
    <lineage>
        <taxon>Bacteria</taxon>
        <taxon>Bacillati</taxon>
        <taxon>Cyanobacteriota</taxon>
        <taxon>Cyanophyceae</taxon>
        <taxon>Synechococcales</taxon>
        <taxon>Synechococcaceae</taxon>
        <taxon>Synechococcus</taxon>
    </lineage>
</organism>
<gene>
    <name evidence="1" type="primary">psbT</name>
    <name type="ordered locus">sync_0533</name>
</gene>
<evidence type="ECO:0000255" key="1">
    <source>
        <dbReference type="HAMAP-Rule" id="MF_00808"/>
    </source>
</evidence>
<keyword id="KW-0472">Membrane</keyword>
<keyword id="KW-0602">Photosynthesis</keyword>
<keyword id="KW-0604">Photosystem II</keyword>
<keyword id="KW-1185">Reference proteome</keyword>
<keyword id="KW-0793">Thylakoid</keyword>
<keyword id="KW-0812">Transmembrane</keyword>
<keyword id="KW-1133">Transmembrane helix</keyword>
<comment type="function">
    <text evidence="1">Found at the monomer-monomer interface of the photosystem II (PS II) dimer, plays a role in assembly and dimerization of PSII. PSII is a light-driven water plastoquinone oxidoreductase, using light energy to abstract electrons from H(2)O, generating a proton gradient subsequently used for ATP formation.</text>
</comment>
<comment type="subunit">
    <text evidence="1">PSII is composed of 1 copy each of membrane proteins PsbA, PsbB, PsbC, PsbD, PsbE, PsbF, PsbH, PsbI, PsbJ, PsbK, PsbL, PsbM, PsbT, PsbX, PsbY, PsbZ, Psb30/Ycf12, peripheral proteins PsbO, CyanoQ (PsbQ), PsbU, PsbV and a large number of cofactors. It forms dimeric complexes.</text>
</comment>
<comment type="subcellular location">
    <subcellularLocation>
        <location evidence="1">Cellular thylakoid membrane</location>
        <topology evidence="1">Single-pass membrane protein</topology>
    </subcellularLocation>
</comment>
<comment type="similarity">
    <text evidence="1">Belongs to the PsbT family.</text>
</comment>
<name>PSBT_SYNS3</name>